<evidence type="ECO:0000255" key="1">
    <source>
        <dbReference type="HAMAP-Rule" id="MF_01064"/>
    </source>
</evidence>
<name>YAEP_SALHS</name>
<feature type="chain" id="PRO_1000136543" description="UPF0253 protein YaeP">
    <location>
        <begin position="1"/>
        <end position="66"/>
    </location>
</feature>
<proteinExistence type="inferred from homology"/>
<dbReference type="EMBL" id="CP001120">
    <property type="protein sequence ID" value="ACF66284.1"/>
    <property type="molecule type" value="Genomic_DNA"/>
</dbReference>
<dbReference type="RefSeq" id="WP_001518678.1">
    <property type="nucleotide sequence ID" value="NC_011083.1"/>
</dbReference>
<dbReference type="SMR" id="B4TK66"/>
<dbReference type="KEGG" id="seh:SeHA_C0276"/>
<dbReference type="HOGENOM" id="CLU_190008_0_0_6"/>
<dbReference type="Proteomes" id="UP000001866">
    <property type="component" value="Chromosome"/>
</dbReference>
<dbReference type="HAMAP" id="MF_01064">
    <property type="entry name" value="UPF0253"/>
    <property type="match status" value="1"/>
</dbReference>
<dbReference type="InterPro" id="IPR009624">
    <property type="entry name" value="UPF0253"/>
</dbReference>
<dbReference type="NCBIfam" id="NF003436">
    <property type="entry name" value="PRK04964.1"/>
    <property type="match status" value="1"/>
</dbReference>
<dbReference type="Pfam" id="PF06786">
    <property type="entry name" value="UPF0253"/>
    <property type="match status" value="1"/>
</dbReference>
<sequence length="66" mass="7156">MEKYCELVRKRYAEIASGDLGYVPDALGCVLKVLNEVAADSALSESVREKAAYAAANLLVSDYVNE</sequence>
<organism>
    <name type="scientific">Salmonella heidelberg (strain SL476)</name>
    <dbReference type="NCBI Taxonomy" id="454169"/>
    <lineage>
        <taxon>Bacteria</taxon>
        <taxon>Pseudomonadati</taxon>
        <taxon>Pseudomonadota</taxon>
        <taxon>Gammaproteobacteria</taxon>
        <taxon>Enterobacterales</taxon>
        <taxon>Enterobacteriaceae</taxon>
        <taxon>Salmonella</taxon>
    </lineage>
</organism>
<gene>
    <name evidence="1" type="primary">yaeP</name>
    <name type="ordered locus">SeHA_C0276</name>
</gene>
<comment type="similarity">
    <text evidence="1">Belongs to the UPF0253 family.</text>
</comment>
<reference key="1">
    <citation type="journal article" date="2011" name="J. Bacteriol.">
        <title>Comparative genomics of 28 Salmonella enterica isolates: evidence for CRISPR-mediated adaptive sublineage evolution.</title>
        <authorList>
            <person name="Fricke W.F."/>
            <person name="Mammel M.K."/>
            <person name="McDermott P.F."/>
            <person name="Tartera C."/>
            <person name="White D.G."/>
            <person name="Leclerc J.E."/>
            <person name="Ravel J."/>
            <person name="Cebula T.A."/>
        </authorList>
    </citation>
    <scope>NUCLEOTIDE SEQUENCE [LARGE SCALE GENOMIC DNA]</scope>
    <source>
        <strain>SL476</strain>
    </source>
</reference>
<accession>B4TK66</accession>
<protein>
    <recommendedName>
        <fullName evidence="1">UPF0253 protein YaeP</fullName>
    </recommendedName>
</protein>